<accession>B3CN38</accession>
<dbReference type="EMBL" id="AM999887">
    <property type="protein sequence ID" value="CAQ55286.1"/>
    <property type="molecule type" value="Genomic_DNA"/>
</dbReference>
<dbReference type="RefSeq" id="WP_007302544.1">
    <property type="nucleotide sequence ID" value="NC_010981.1"/>
</dbReference>
<dbReference type="SMR" id="B3CN38"/>
<dbReference type="KEGG" id="wpi:WP1178"/>
<dbReference type="eggNOG" id="COG0094">
    <property type="taxonomic scope" value="Bacteria"/>
</dbReference>
<dbReference type="HOGENOM" id="CLU_061015_2_1_5"/>
<dbReference type="Proteomes" id="UP000008814">
    <property type="component" value="Chromosome"/>
</dbReference>
<dbReference type="GO" id="GO:1990904">
    <property type="term" value="C:ribonucleoprotein complex"/>
    <property type="evidence" value="ECO:0007669"/>
    <property type="project" value="UniProtKB-KW"/>
</dbReference>
<dbReference type="GO" id="GO:0005840">
    <property type="term" value="C:ribosome"/>
    <property type="evidence" value="ECO:0007669"/>
    <property type="project" value="UniProtKB-KW"/>
</dbReference>
<dbReference type="GO" id="GO:0019843">
    <property type="term" value="F:rRNA binding"/>
    <property type="evidence" value="ECO:0007669"/>
    <property type="project" value="UniProtKB-UniRule"/>
</dbReference>
<dbReference type="GO" id="GO:0003735">
    <property type="term" value="F:structural constituent of ribosome"/>
    <property type="evidence" value="ECO:0007669"/>
    <property type="project" value="InterPro"/>
</dbReference>
<dbReference type="GO" id="GO:0000049">
    <property type="term" value="F:tRNA binding"/>
    <property type="evidence" value="ECO:0007669"/>
    <property type="project" value="UniProtKB-UniRule"/>
</dbReference>
<dbReference type="GO" id="GO:0006412">
    <property type="term" value="P:translation"/>
    <property type="evidence" value="ECO:0007669"/>
    <property type="project" value="UniProtKB-UniRule"/>
</dbReference>
<dbReference type="FunFam" id="3.30.1440.10:FF:000001">
    <property type="entry name" value="50S ribosomal protein L5"/>
    <property type="match status" value="1"/>
</dbReference>
<dbReference type="Gene3D" id="3.30.1440.10">
    <property type="match status" value="1"/>
</dbReference>
<dbReference type="HAMAP" id="MF_01333_B">
    <property type="entry name" value="Ribosomal_uL5_B"/>
    <property type="match status" value="1"/>
</dbReference>
<dbReference type="InterPro" id="IPR002132">
    <property type="entry name" value="Ribosomal_uL5"/>
</dbReference>
<dbReference type="InterPro" id="IPR020930">
    <property type="entry name" value="Ribosomal_uL5_bac-type"/>
</dbReference>
<dbReference type="InterPro" id="IPR031309">
    <property type="entry name" value="Ribosomal_uL5_C"/>
</dbReference>
<dbReference type="InterPro" id="IPR020929">
    <property type="entry name" value="Ribosomal_uL5_CS"/>
</dbReference>
<dbReference type="InterPro" id="IPR022803">
    <property type="entry name" value="Ribosomal_uL5_dom_sf"/>
</dbReference>
<dbReference type="InterPro" id="IPR031310">
    <property type="entry name" value="Ribosomal_uL5_N"/>
</dbReference>
<dbReference type="NCBIfam" id="NF000585">
    <property type="entry name" value="PRK00010.1"/>
    <property type="match status" value="1"/>
</dbReference>
<dbReference type="PANTHER" id="PTHR11994">
    <property type="entry name" value="60S RIBOSOMAL PROTEIN L11-RELATED"/>
    <property type="match status" value="1"/>
</dbReference>
<dbReference type="Pfam" id="PF00281">
    <property type="entry name" value="Ribosomal_L5"/>
    <property type="match status" value="1"/>
</dbReference>
<dbReference type="Pfam" id="PF00673">
    <property type="entry name" value="Ribosomal_L5_C"/>
    <property type="match status" value="1"/>
</dbReference>
<dbReference type="PIRSF" id="PIRSF002161">
    <property type="entry name" value="Ribosomal_L5"/>
    <property type="match status" value="1"/>
</dbReference>
<dbReference type="SUPFAM" id="SSF55282">
    <property type="entry name" value="RL5-like"/>
    <property type="match status" value="1"/>
</dbReference>
<dbReference type="PROSITE" id="PS00358">
    <property type="entry name" value="RIBOSOMAL_L5"/>
    <property type="match status" value="1"/>
</dbReference>
<organism>
    <name type="scientific">Wolbachia pipientis subsp. Culex pipiens (strain wPip)</name>
    <dbReference type="NCBI Taxonomy" id="570417"/>
    <lineage>
        <taxon>Bacteria</taxon>
        <taxon>Pseudomonadati</taxon>
        <taxon>Pseudomonadota</taxon>
        <taxon>Alphaproteobacteria</taxon>
        <taxon>Rickettsiales</taxon>
        <taxon>Anaplasmataceae</taxon>
        <taxon>Wolbachieae</taxon>
        <taxon>Wolbachia</taxon>
    </lineage>
</organism>
<reference key="1">
    <citation type="journal article" date="2008" name="Mol. Biol. Evol.">
        <title>Genome evolution of Wolbachia strain wPip from the Culex pipiens group.</title>
        <authorList>
            <person name="Klasson L."/>
            <person name="Walker T."/>
            <person name="Sebaihia M."/>
            <person name="Sanders M.J."/>
            <person name="Quail M.A."/>
            <person name="Lord A."/>
            <person name="Sanders S."/>
            <person name="Earl J."/>
            <person name="O'Neill S.L."/>
            <person name="Thomson N."/>
            <person name="Sinkins S.P."/>
            <person name="Parkhill J."/>
        </authorList>
    </citation>
    <scope>NUCLEOTIDE SEQUENCE [LARGE SCALE GENOMIC DNA]</scope>
    <source>
        <strain>wPip</strain>
    </source>
</reference>
<sequence>MFKQLYKDNIVKSLKDKFNYSNVMQVPKLVKVCINMGVGDAATDNKAINEPFDNLHSIAGQKPVLTFAKKSISGFKIRKGATVGCKVTLRRNKMYEFLERLIYIALPREKDFRGFSVKQFDGHGNFSFGIKEHISFLEIDYDKISKIRGMDINIITSAVSDKEAKELLLALKFPFFDN</sequence>
<gene>
    <name evidence="1" type="primary">rplE</name>
    <name type="ordered locus">WP1178</name>
</gene>
<comment type="function">
    <text evidence="1">This is one of the proteins that bind and probably mediate the attachment of the 5S RNA into the large ribosomal subunit, where it forms part of the central protuberance. In the 70S ribosome it contacts protein S13 of the 30S subunit (bridge B1b), connecting the 2 subunits; this bridge is implicated in subunit movement. Contacts the P site tRNA; the 5S rRNA and some of its associated proteins might help stabilize positioning of ribosome-bound tRNAs.</text>
</comment>
<comment type="subunit">
    <text evidence="1">Part of the 50S ribosomal subunit; part of the 5S rRNA/L5/L18/L25 subcomplex. Contacts the 5S rRNA and the P site tRNA. Forms a bridge to the 30S subunit in the 70S ribosome.</text>
</comment>
<comment type="similarity">
    <text evidence="1">Belongs to the universal ribosomal protein uL5 family.</text>
</comment>
<keyword id="KW-0687">Ribonucleoprotein</keyword>
<keyword id="KW-0689">Ribosomal protein</keyword>
<keyword id="KW-0694">RNA-binding</keyword>
<keyword id="KW-0699">rRNA-binding</keyword>
<keyword id="KW-0820">tRNA-binding</keyword>
<evidence type="ECO:0000255" key="1">
    <source>
        <dbReference type="HAMAP-Rule" id="MF_01333"/>
    </source>
</evidence>
<evidence type="ECO:0000305" key="2"/>
<name>RL5_WOLPP</name>
<protein>
    <recommendedName>
        <fullName evidence="1">Large ribosomal subunit protein uL5</fullName>
    </recommendedName>
    <alternativeName>
        <fullName evidence="2">50S ribosomal protein L5</fullName>
    </alternativeName>
</protein>
<feature type="chain" id="PRO_1000142472" description="Large ribosomal subunit protein uL5">
    <location>
        <begin position="1"/>
        <end position="178"/>
    </location>
</feature>
<proteinExistence type="inferred from homology"/>